<comment type="function">
    <text evidence="6 9 10 11">Toll-related receptor which binds to the neurotrophins NT1 and spz5 (PubMed:10973475, PubMed:23892553). Essential for antiviral autophagy, it detects and binds to the vesicular stomatitis virus (vsv) following infection (PubMed:22464169). This role is likely to be independent of the canonical Toll, immune deficiency, and JAK-STAT signaling pathways (PubMed:22464169). Functions in olfactory circuit assembly by promoting synaptic partner matching between olfactory receptor neurons (ORN) axons and projection neurons (PN) dendrites partners in the antennal lobe (PubMed:25741726). Function in the Va1d ORNs is necessary and sufficient for correct targeting to their partner PN dendrites (PubMed:25741726). Also involved in the targeting of other classes of ORN axons (PubMed:25741726). Functions with Toll-6 to regulate motor axon targeting and neuronal survival in the central nervous system (CNS) (PubMed:23892553). May be an upstream component of the NF-kappa-B (rel) regulatory cascade (PubMed:23892553).</text>
</comment>
<comment type="subcellular location">
    <subcellularLocation>
        <location evidence="9">Cell membrane</location>
        <topology evidence="12">Single-pass type I membrane protein</topology>
    </subcellularLocation>
</comment>
<comment type="tissue specificity">
    <text evidence="10">Expressed in the fan-shaped body and the ellipsoid body, which are components of the locomotion center in the CNS (at protein level) (PubMed:23892553).</text>
</comment>
<comment type="developmental stage">
    <text evidence="6 7 8 10 11">In embryos, expressed in the ventral neurons, motor neurons and in the longitudinal interneuron axons (at protein level) (PubMed:23892553). May also be expressed in the motor neuron dendrites or possibly the glia (at protein level) (PubMed:23892553). Expressed 48 hours after puparium formation in the lateral glomeruli of the anterior and central regions of the antennal lobe, including the DA1, VA1d and VA1v glomeruli (at protein level) (PubMed:25741726). Expressed zygotically (PubMed:12617819). High levels of expression in embryos and pupae, and relatively low levels of expression in larvae and adults (PubMed:10973475). At germ band extension, expressed as 14 stripes in the embryo (PubMed:12617819). At germ band retraction, expressed in a subset of neurons in the CNS, the precursors of the leg imaginal disks and in the ventral epithelium of the large intestine (PubMed:12617819). Expressed in the posterior and anterior spiracles (PubMed:12617819). In stage 16 embryos, expression decreases and is mainly localized to the CNS (PubMed:12617819). Expressed in the proximal region of the wing imaginal disks, around the wing pouch and hinge regions (PubMed:21158756). Also expressed in the distal segments of the leg imaginal disks, with high levels of expression around the A-P border of the tarsal to tibia segments (PubMed:21158756). In larvae, detected in the fat body (PubMed:12617819).</text>
</comment>
<comment type="induction">
    <text evidence="9">Up-regulated during vesicular stomatitis virus (VSV) infection.</text>
</comment>
<comment type="disruption phenotype">
    <text evidence="8 9 11">Mistargeting of VA1d ORN axons to a medial position (PubMed:25741726). No effect on the immune response to septic injury using a mixture of Gram-positive and Gram-negative bacteria; adults are able induce expression of antibacterial peptide genes (Drs, AttA, DptA and Mtk) and mount a proper innate immune response (PubMed:21158756). RNAi-mediated knockdown results in adults that are acutely sensitive to the vesicular stomatitis virus (vsv) (PubMed:22464169). Following infection with vsv adult survival is decreased, and adults show a dramatic increase in viral RNA production 6 days post vsv infection and viral replication 9 days post infection (PubMed:22464169). Reduced autophagy in adult fat body cells following vsv infection (PubMed:22464169). Starvation-induced autophagy is not affected (PubMed:22464169).</text>
</comment>
<comment type="similarity">
    <text evidence="12">Belongs to the Toll-like receptor family.</text>
</comment>
<comment type="caution">
    <text evidence="1 12">In some plant proteins and in human SARM1, the TIR domain has NAD(+) hydrolase (NADase) activity (By similarity). However, despite the presence of the catalytic Asp residue, the isolated TIR domain of human TLR4 lacks NADase activity (By similarity). Based on this, it is unlikely that Toll-like receptors have NADase activity.</text>
</comment>
<gene>
    <name evidence="16" type="primary">Toll-7</name>
    <name evidence="16" type="ORF">CG8595</name>
</gene>
<reference evidence="13" key="1">
    <citation type="journal article" date="2000" name="Proc. Natl. Acad. Sci. U.S.A.">
        <title>Toll-related receptors and the control of antimicrobial peptide expression in Drosophila.</title>
        <authorList>
            <person name="Tauszig S."/>
            <person name="Jouanguy E."/>
            <person name="Hoffmann J.A."/>
            <person name="Imler J.L."/>
        </authorList>
    </citation>
    <scope>NUCLEOTIDE SEQUENCE [MRNA]</scope>
    <scope>FUNCTION</scope>
    <scope>DEVELOPMENTAL STAGE</scope>
</reference>
<reference evidence="17" key="2">
    <citation type="journal article" date="2000" name="Science">
        <title>The genome sequence of Drosophila melanogaster.</title>
        <authorList>
            <person name="Adams M.D."/>
            <person name="Celniker S.E."/>
            <person name="Holt R.A."/>
            <person name="Evans C.A."/>
            <person name="Gocayne J.D."/>
            <person name="Amanatides P.G."/>
            <person name="Scherer S.E."/>
            <person name="Li P.W."/>
            <person name="Hoskins R.A."/>
            <person name="Galle R.F."/>
            <person name="George R.A."/>
            <person name="Lewis S.E."/>
            <person name="Richards S."/>
            <person name="Ashburner M."/>
            <person name="Henderson S.N."/>
            <person name="Sutton G.G."/>
            <person name="Wortman J.R."/>
            <person name="Yandell M.D."/>
            <person name="Zhang Q."/>
            <person name="Chen L.X."/>
            <person name="Brandon R.C."/>
            <person name="Rogers Y.-H.C."/>
            <person name="Blazej R.G."/>
            <person name="Champe M."/>
            <person name="Pfeiffer B.D."/>
            <person name="Wan K.H."/>
            <person name="Doyle C."/>
            <person name="Baxter E.G."/>
            <person name="Helt G."/>
            <person name="Nelson C.R."/>
            <person name="Miklos G.L.G."/>
            <person name="Abril J.F."/>
            <person name="Agbayani A."/>
            <person name="An H.-J."/>
            <person name="Andrews-Pfannkoch C."/>
            <person name="Baldwin D."/>
            <person name="Ballew R.M."/>
            <person name="Basu A."/>
            <person name="Baxendale J."/>
            <person name="Bayraktaroglu L."/>
            <person name="Beasley E.M."/>
            <person name="Beeson K.Y."/>
            <person name="Benos P.V."/>
            <person name="Berman B.P."/>
            <person name="Bhandari D."/>
            <person name="Bolshakov S."/>
            <person name="Borkova D."/>
            <person name="Botchan M.R."/>
            <person name="Bouck J."/>
            <person name="Brokstein P."/>
            <person name="Brottier P."/>
            <person name="Burtis K.C."/>
            <person name="Busam D.A."/>
            <person name="Butler H."/>
            <person name="Cadieu E."/>
            <person name="Center A."/>
            <person name="Chandra I."/>
            <person name="Cherry J.M."/>
            <person name="Cawley S."/>
            <person name="Dahlke C."/>
            <person name="Davenport L.B."/>
            <person name="Davies P."/>
            <person name="de Pablos B."/>
            <person name="Delcher A."/>
            <person name="Deng Z."/>
            <person name="Mays A.D."/>
            <person name="Dew I."/>
            <person name="Dietz S.M."/>
            <person name="Dodson K."/>
            <person name="Doup L.E."/>
            <person name="Downes M."/>
            <person name="Dugan-Rocha S."/>
            <person name="Dunkov B.C."/>
            <person name="Dunn P."/>
            <person name="Durbin K.J."/>
            <person name="Evangelista C.C."/>
            <person name="Ferraz C."/>
            <person name="Ferriera S."/>
            <person name="Fleischmann W."/>
            <person name="Fosler C."/>
            <person name="Gabrielian A.E."/>
            <person name="Garg N.S."/>
            <person name="Gelbart W.M."/>
            <person name="Glasser K."/>
            <person name="Glodek A."/>
            <person name="Gong F."/>
            <person name="Gorrell J.H."/>
            <person name="Gu Z."/>
            <person name="Guan P."/>
            <person name="Harris M."/>
            <person name="Harris N.L."/>
            <person name="Harvey D.A."/>
            <person name="Heiman T.J."/>
            <person name="Hernandez J.R."/>
            <person name="Houck J."/>
            <person name="Hostin D."/>
            <person name="Houston K.A."/>
            <person name="Howland T.J."/>
            <person name="Wei M.-H."/>
            <person name="Ibegwam C."/>
            <person name="Jalali M."/>
            <person name="Kalush F."/>
            <person name="Karpen G.H."/>
            <person name="Ke Z."/>
            <person name="Kennison J.A."/>
            <person name="Ketchum K.A."/>
            <person name="Kimmel B.E."/>
            <person name="Kodira C.D."/>
            <person name="Kraft C.L."/>
            <person name="Kravitz S."/>
            <person name="Kulp D."/>
            <person name="Lai Z."/>
            <person name="Lasko P."/>
            <person name="Lei Y."/>
            <person name="Levitsky A.A."/>
            <person name="Li J.H."/>
            <person name="Li Z."/>
            <person name="Liang Y."/>
            <person name="Lin X."/>
            <person name="Liu X."/>
            <person name="Mattei B."/>
            <person name="McIntosh T.C."/>
            <person name="McLeod M.P."/>
            <person name="McPherson D."/>
            <person name="Merkulov G."/>
            <person name="Milshina N.V."/>
            <person name="Mobarry C."/>
            <person name="Morris J."/>
            <person name="Moshrefi A."/>
            <person name="Mount S.M."/>
            <person name="Moy M."/>
            <person name="Murphy B."/>
            <person name="Murphy L."/>
            <person name="Muzny D.M."/>
            <person name="Nelson D.L."/>
            <person name="Nelson D.R."/>
            <person name="Nelson K.A."/>
            <person name="Nixon K."/>
            <person name="Nusskern D.R."/>
            <person name="Pacleb J.M."/>
            <person name="Palazzolo M."/>
            <person name="Pittman G.S."/>
            <person name="Pan S."/>
            <person name="Pollard J."/>
            <person name="Puri V."/>
            <person name="Reese M.G."/>
            <person name="Reinert K."/>
            <person name="Remington K."/>
            <person name="Saunders R.D.C."/>
            <person name="Scheeler F."/>
            <person name="Shen H."/>
            <person name="Shue B.C."/>
            <person name="Siden-Kiamos I."/>
            <person name="Simpson M."/>
            <person name="Skupski M.P."/>
            <person name="Smith T.J."/>
            <person name="Spier E."/>
            <person name="Spradling A.C."/>
            <person name="Stapleton M."/>
            <person name="Strong R."/>
            <person name="Sun E."/>
            <person name="Svirskas R."/>
            <person name="Tector C."/>
            <person name="Turner R."/>
            <person name="Venter E."/>
            <person name="Wang A.H."/>
            <person name="Wang X."/>
            <person name="Wang Z.-Y."/>
            <person name="Wassarman D.A."/>
            <person name="Weinstock G.M."/>
            <person name="Weissenbach J."/>
            <person name="Williams S.M."/>
            <person name="Woodage T."/>
            <person name="Worley K.C."/>
            <person name="Wu D."/>
            <person name="Yang S."/>
            <person name="Yao Q.A."/>
            <person name="Ye J."/>
            <person name="Yeh R.-F."/>
            <person name="Zaveri J.S."/>
            <person name="Zhan M."/>
            <person name="Zhang G."/>
            <person name="Zhao Q."/>
            <person name="Zheng L."/>
            <person name="Zheng X.H."/>
            <person name="Zhong F.N."/>
            <person name="Zhong W."/>
            <person name="Zhou X."/>
            <person name="Zhu S.C."/>
            <person name="Zhu X."/>
            <person name="Smith H.O."/>
            <person name="Gibbs R.A."/>
            <person name="Myers E.W."/>
            <person name="Rubin G.M."/>
            <person name="Venter J.C."/>
        </authorList>
    </citation>
    <scope>NUCLEOTIDE SEQUENCE [LARGE SCALE GENOMIC DNA]</scope>
    <source>
        <strain evidence="17">Berkeley</strain>
    </source>
</reference>
<reference evidence="17" key="3">
    <citation type="journal article" date="2002" name="Genome Biol.">
        <title>Annotation of the Drosophila melanogaster euchromatic genome: a systematic review.</title>
        <authorList>
            <person name="Misra S."/>
            <person name="Crosby M.A."/>
            <person name="Mungall C.J."/>
            <person name="Matthews B.B."/>
            <person name="Campbell K.S."/>
            <person name="Hradecky P."/>
            <person name="Huang Y."/>
            <person name="Kaminker J.S."/>
            <person name="Millburn G.H."/>
            <person name="Prochnik S.E."/>
            <person name="Smith C.D."/>
            <person name="Tupy J.L."/>
            <person name="Whitfield E.J."/>
            <person name="Bayraktaroglu L."/>
            <person name="Berman B.P."/>
            <person name="Bettencourt B.R."/>
            <person name="Celniker S.E."/>
            <person name="de Grey A.D.N.J."/>
            <person name="Drysdale R.A."/>
            <person name="Harris N.L."/>
            <person name="Richter J."/>
            <person name="Russo S."/>
            <person name="Schroeder A.J."/>
            <person name="Shu S.Q."/>
            <person name="Stapleton M."/>
            <person name="Yamada C."/>
            <person name="Ashburner M."/>
            <person name="Gelbart W.M."/>
            <person name="Rubin G.M."/>
            <person name="Lewis S.E."/>
        </authorList>
    </citation>
    <scope>GENOME REANNOTATION</scope>
    <source>
        <strain evidence="17">Berkeley</strain>
    </source>
</reference>
<reference evidence="14" key="4">
    <citation type="journal article" date="2005" name="Mol. Biol. Evol.">
        <title>Intragenic Hill-Robertson interference influences selection intensity on synonymous mutations in Drosophila.</title>
        <authorList>
            <person name="Comeron J.M."/>
            <person name="Guthrie T.B."/>
        </authorList>
    </citation>
    <scope>NUCLEOTIDE SEQUENCE [GENOMIC DNA] OF 13-1435</scope>
    <source>
        <strain evidence="14">Ral1</strain>
    </source>
</reference>
<reference evidence="15" key="5">
    <citation type="submission" date="2010-09" db="EMBL/GenBank/DDBJ databases">
        <authorList>
            <person name="Carlson J."/>
            <person name="Booth B."/>
            <person name="Frise E."/>
            <person name="Park S."/>
            <person name="Wan K."/>
            <person name="Yu C."/>
            <person name="Celniker S."/>
        </authorList>
    </citation>
    <scope>NUCLEOTIDE SEQUENCE [LARGE SCALE MRNA] OF 17-1031</scope>
</reference>
<reference evidence="12" key="6">
    <citation type="journal article" date="2002" name="Gene Expr. Patterns">
        <title>Tissue and stage-specific expression of the Tolls in Drosophila embryos.</title>
        <authorList>
            <person name="Kambris Z."/>
            <person name="Hoffmann J.A."/>
            <person name="Imler J.L."/>
            <person name="Capovilla M."/>
        </authorList>
    </citation>
    <scope>DEVELOPMENTAL STAGE</scope>
</reference>
<reference evidence="12" key="7">
    <citation type="journal article" date="2010" name="Dev. Growth Differ.">
        <title>Functional analysis of Toll-related genes in Drosophila.</title>
        <authorList>
            <person name="Yagi Y."/>
            <person name="Nishida Y."/>
            <person name="Ip Y.T."/>
        </authorList>
    </citation>
    <scope>DEVELOPMENTAL STAGE</scope>
    <scope>DISRUPTION PHENOTYPE</scope>
</reference>
<reference evidence="12" key="8">
    <citation type="journal article" date="2012" name="Immunity">
        <title>Virus recognition by Toll-7 activates antiviral autophagy in Drosophila.</title>
        <authorList>
            <person name="Nakamoto M."/>
            <person name="Moy R.H."/>
            <person name="Xu J."/>
            <person name="Bambina S."/>
            <person name="Yasunaga A."/>
            <person name="Shelly S.S."/>
            <person name="Gold B."/>
            <person name="Cherry S."/>
        </authorList>
    </citation>
    <scope>FUNCTION</scope>
    <scope>SUBCELLULAR LOCATION</scope>
    <scope>INDUCTION BY VIRAL INFECTION</scope>
    <scope>DISRUPTION PHENOTYPE</scope>
</reference>
<reference evidence="12" key="9">
    <citation type="journal article" date="2013" name="Nat. Neurosci.">
        <title>Toll-6 and Toll-7 function as neurotrophin receptors in the Drosophila melanogaster CNS.</title>
        <authorList>
            <person name="McIlroy G."/>
            <person name="Foldi I."/>
            <person name="Aurikko J."/>
            <person name="Wentzell J.S."/>
            <person name="Lim M.A."/>
            <person name="Fenton J.C."/>
            <person name="Gay N.J."/>
            <person name="Hidalgo A."/>
        </authorList>
    </citation>
    <scope>FUNCTION</scope>
    <scope>TISSUE SPECIFICITY</scope>
    <scope>DEVELOPMENTAL STAGE</scope>
</reference>
<reference evidence="12" key="10">
    <citation type="journal article" date="2015" name="Neuron">
        <title>Toll receptors instruct axon and dendrite targeting and participate in synaptic partner matching in a Drosophila olfactory circuit.</title>
        <authorList>
            <person name="Ward A."/>
            <person name="Hong W."/>
            <person name="Favaloro V."/>
            <person name="Luo L."/>
        </authorList>
    </citation>
    <scope>FUNCTION</scope>
    <scope>DEVELOPMENTAL STAGE</scope>
    <scope>DISRUPTION PHENOTYPE</scope>
</reference>
<keyword id="KW-1003">Cell membrane</keyword>
<keyword id="KW-0217">Developmental protein</keyword>
<keyword id="KW-1015">Disulfide bond</keyword>
<keyword id="KW-0391">Immunity</keyword>
<keyword id="KW-0399">Innate immunity</keyword>
<keyword id="KW-0433">Leucine-rich repeat</keyword>
<keyword id="KW-0472">Membrane</keyword>
<keyword id="KW-0520">NAD</keyword>
<keyword id="KW-0675">Receptor</keyword>
<keyword id="KW-1185">Reference proteome</keyword>
<keyword id="KW-0677">Repeat</keyword>
<keyword id="KW-0732">Signal</keyword>
<keyword id="KW-0812">Transmembrane</keyword>
<keyword id="KW-1133">Transmembrane helix</keyword>
<evidence type="ECO:0000250" key="1">
    <source>
        <dbReference type="UniProtKB" id="O00206"/>
    </source>
</evidence>
<evidence type="ECO:0000250" key="2">
    <source>
        <dbReference type="UniProtKB" id="P08953"/>
    </source>
</evidence>
<evidence type="ECO:0000255" key="3"/>
<evidence type="ECO:0000255" key="4">
    <source>
        <dbReference type="PROSITE-ProRule" id="PRU00204"/>
    </source>
</evidence>
<evidence type="ECO:0000256" key="5">
    <source>
        <dbReference type="SAM" id="MobiDB-lite"/>
    </source>
</evidence>
<evidence type="ECO:0000269" key="6">
    <source>
    </source>
</evidence>
<evidence type="ECO:0000269" key="7">
    <source>
    </source>
</evidence>
<evidence type="ECO:0000269" key="8">
    <source>
    </source>
</evidence>
<evidence type="ECO:0000269" key="9">
    <source>
    </source>
</evidence>
<evidence type="ECO:0000269" key="10">
    <source>
    </source>
</evidence>
<evidence type="ECO:0000269" key="11">
    <source>
    </source>
</evidence>
<evidence type="ECO:0000305" key="12"/>
<evidence type="ECO:0000312" key="13">
    <source>
        <dbReference type="EMBL" id="AAF86225.1"/>
    </source>
</evidence>
<evidence type="ECO:0000312" key="14">
    <source>
        <dbReference type="EMBL" id="ABA86520.1"/>
    </source>
</evidence>
<evidence type="ECO:0000312" key="15">
    <source>
        <dbReference type="EMBL" id="ADN32842.1"/>
    </source>
</evidence>
<evidence type="ECO:0000312" key="16">
    <source>
        <dbReference type="FlyBase" id="FBgn0034476"/>
    </source>
</evidence>
<evidence type="ECO:0000312" key="17">
    <source>
        <dbReference type="Proteomes" id="UP000000803"/>
    </source>
</evidence>
<name>TOLL7_DROME</name>
<dbReference type="EMBL" id="AF247765">
    <property type="protein sequence ID" value="AAF86225.1"/>
    <property type="molecule type" value="mRNA"/>
</dbReference>
<dbReference type="EMBL" id="DQ138914">
    <property type="protein sequence ID" value="ABA86520.1"/>
    <property type="molecule type" value="Genomic_DNA"/>
</dbReference>
<dbReference type="EMBL" id="AE013599">
    <property type="protein sequence ID" value="AAF57514.1"/>
    <property type="molecule type" value="Genomic_DNA"/>
</dbReference>
<dbReference type="EMBL" id="BT125656">
    <property type="protein sequence ID" value="ADN32842.1"/>
    <property type="molecule type" value="mRNA"/>
</dbReference>
<dbReference type="RefSeq" id="NP_523797.1">
    <property type="nucleotide sequence ID" value="NM_079073.3"/>
</dbReference>
<dbReference type="SMR" id="Q7KIN0"/>
<dbReference type="FunCoup" id="Q7KIN0">
    <property type="interactions" value="25"/>
</dbReference>
<dbReference type="STRING" id="7227.FBpp0085638"/>
<dbReference type="GlyGen" id="Q7KIN0">
    <property type="glycosylation" value="1 site"/>
</dbReference>
<dbReference type="SwissPalm" id="Q7KIN0"/>
<dbReference type="PaxDb" id="7227-FBpp0085638"/>
<dbReference type="EnsemblMetazoa" id="FBtr0086336">
    <property type="protein sequence ID" value="FBpp0085638"/>
    <property type="gene ID" value="FBgn0034476"/>
</dbReference>
<dbReference type="GeneID" id="37272"/>
<dbReference type="KEGG" id="dme:Dmel_CG8595"/>
<dbReference type="UCSC" id="CG8595-RA">
    <property type="organism name" value="d. melanogaster"/>
</dbReference>
<dbReference type="AGR" id="FB:FBgn0034476"/>
<dbReference type="CTD" id="37272"/>
<dbReference type="FlyBase" id="FBgn0034476">
    <property type="gene designation" value="Toll-7"/>
</dbReference>
<dbReference type="VEuPathDB" id="VectorBase:FBgn0034476"/>
<dbReference type="eggNOG" id="KOG4641">
    <property type="taxonomic scope" value="Eukaryota"/>
</dbReference>
<dbReference type="GeneTree" id="ENSGT00940000159318"/>
<dbReference type="HOGENOM" id="CLU_004280_0_0_1"/>
<dbReference type="InParanoid" id="Q7KIN0"/>
<dbReference type="OMA" id="WSCRCKF"/>
<dbReference type="OrthoDB" id="2015831at2759"/>
<dbReference type="PhylomeDB" id="Q7KIN0"/>
<dbReference type="Reactome" id="R-DME-6794361">
    <property type="pathway name" value="Neurexins and neuroligins"/>
</dbReference>
<dbReference type="BioGRID-ORCS" id="37272">
    <property type="hits" value="0 hits in 1 CRISPR screen"/>
</dbReference>
<dbReference type="GenomeRNAi" id="37272"/>
<dbReference type="PRO" id="PR:Q7KIN0"/>
<dbReference type="Proteomes" id="UP000000803">
    <property type="component" value="Chromosome 2R"/>
</dbReference>
<dbReference type="Bgee" id="FBgn0034476">
    <property type="expression patterns" value="Expressed in lamina monopolar neuron L3 (Drosophila) in insect head and 170 other cell types or tissues"/>
</dbReference>
<dbReference type="ExpressionAtlas" id="Q7KIN0">
    <property type="expression patterns" value="baseline and differential"/>
</dbReference>
<dbReference type="GO" id="GO:0009897">
    <property type="term" value="C:external side of plasma membrane"/>
    <property type="evidence" value="ECO:0000314"/>
    <property type="project" value="FlyBase"/>
</dbReference>
<dbReference type="GO" id="GO:0031012">
    <property type="term" value="C:extracellular matrix"/>
    <property type="evidence" value="ECO:0000318"/>
    <property type="project" value="GO_Central"/>
</dbReference>
<dbReference type="GO" id="GO:0005615">
    <property type="term" value="C:extracellular space"/>
    <property type="evidence" value="ECO:0000318"/>
    <property type="project" value="GO_Central"/>
</dbReference>
<dbReference type="GO" id="GO:0005886">
    <property type="term" value="C:plasma membrane"/>
    <property type="evidence" value="ECO:0000314"/>
    <property type="project" value="FlyBase"/>
</dbReference>
<dbReference type="GO" id="GO:0061809">
    <property type="term" value="F:NAD+ nucleosidase activity, cyclic ADP-ribose generating"/>
    <property type="evidence" value="ECO:0007669"/>
    <property type="project" value="UniProtKB-EC"/>
</dbReference>
<dbReference type="GO" id="GO:0005030">
    <property type="term" value="F:neurotrophin receptor activity"/>
    <property type="evidence" value="ECO:0000315"/>
    <property type="project" value="FlyBase"/>
</dbReference>
<dbReference type="GO" id="GO:0038187">
    <property type="term" value="F:pattern recognition receptor activity"/>
    <property type="evidence" value="ECO:0000305"/>
    <property type="project" value="FlyBase"/>
</dbReference>
<dbReference type="GO" id="GO:0004888">
    <property type="term" value="F:transmembrane signaling receptor activity"/>
    <property type="evidence" value="ECO:0000314"/>
    <property type="project" value="FlyBase"/>
</dbReference>
<dbReference type="GO" id="GO:0046790">
    <property type="term" value="F:virion binding"/>
    <property type="evidence" value="ECO:0000314"/>
    <property type="project" value="FlyBase"/>
</dbReference>
<dbReference type="GO" id="GO:0007411">
    <property type="term" value="P:axon guidance"/>
    <property type="evidence" value="ECO:0000315"/>
    <property type="project" value="FlyBase"/>
</dbReference>
<dbReference type="GO" id="GO:0002752">
    <property type="term" value="P:cell surface pattern recognition receptor signaling pathway"/>
    <property type="evidence" value="ECO:0000305"/>
    <property type="project" value="FlyBase"/>
</dbReference>
<dbReference type="GO" id="GO:0051607">
    <property type="term" value="P:defense response to virus"/>
    <property type="evidence" value="ECO:0000315"/>
    <property type="project" value="FlyBase"/>
</dbReference>
<dbReference type="GO" id="GO:0009597">
    <property type="term" value="P:detection of virus"/>
    <property type="evidence" value="ECO:0000314"/>
    <property type="project" value="FlyBase"/>
</dbReference>
<dbReference type="GO" id="GO:0045087">
    <property type="term" value="P:innate immune response"/>
    <property type="evidence" value="ECO:0000315"/>
    <property type="project" value="FlyBase"/>
</dbReference>
<dbReference type="GO" id="GO:0002225">
    <property type="term" value="P:positive regulation of antimicrobial peptide production"/>
    <property type="evidence" value="ECO:0000315"/>
    <property type="project" value="FlyBase"/>
</dbReference>
<dbReference type="GO" id="GO:0010508">
    <property type="term" value="P:positive regulation of autophagy"/>
    <property type="evidence" value="ECO:0000315"/>
    <property type="project" value="FlyBase"/>
</dbReference>
<dbReference type="GO" id="GO:0050688">
    <property type="term" value="P:regulation of defense response to virus"/>
    <property type="evidence" value="ECO:0000315"/>
    <property type="project" value="FlyBase"/>
</dbReference>
<dbReference type="GO" id="GO:0008063">
    <property type="term" value="P:Toll signaling pathway"/>
    <property type="evidence" value="ECO:0000315"/>
    <property type="project" value="FlyBase"/>
</dbReference>
<dbReference type="FunFam" id="3.40.50.10140:FF:000019">
    <property type="entry name" value="18w protein"/>
    <property type="match status" value="1"/>
</dbReference>
<dbReference type="FunFam" id="3.80.10.10:FF:000583">
    <property type="entry name" value="18w protein"/>
    <property type="match status" value="1"/>
</dbReference>
<dbReference type="FunFam" id="3.80.10.10:FF:001164">
    <property type="entry name" value="GH01279p"/>
    <property type="match status" value="1"/>
</dbReference>
<dbReference type="FunFam" id="3.80.10.10:FF:000890">
    <property type="entry name" value="Toll-like receptor 7"/>
    <property type="match status" value="1"/>
</dbReference>
<dbReference type="FunFam" id="3.80.10.10:FF:001116">
    <property type="entry name" value="Toll-like receptor 7"/>
    <property type="match status" value="1"/>
</dbReference>
<dbReference type="FunFam" id="3.80.10.10:FF:000355">
    <property type="entry name" value="Toll-like receptor Tollo"/>
    <property type="match status" value="1"/>
</dbReference>
<dbReference type="Gene3D" id="3.80.10.10">
    <property type="entry name" value="Ribonuclease Inhibitor"/>
    <property type="match status" value="5"/>
</dbReference>
<dbReference type="Gene3D" id="3.40.50.10140">
    <property type="entry name" value="Toll/interleukin-1 receptor homology (TIR) domain"/>
    <property type="match status" value="1"/>
</dbReference>
<dbReference type="InterPro" id="IPR000483">
    <property type="entry name" value="Cys-rich_flank_reg_C"/>
</dbReference>
<dbReference type="InterPro" id="IPR001611">
    <property type="entry name" value="Leu-rich_rpt"/>
</dbReference>
<dbReference type="InterPro" id="IPR003591">
    <property type="entry name" value="Leu-rich_rpt_typical-subtyp"/>
</dbReference>
<dbReference type="InterPro" id="IPR032675">
    <property type="entry name" value="LRR_dom_sf"/>
</dbReference>
<dbReference type="InterPro" id="IPR050333">
    <property type="entry name" value="SLRP"/>
</dbReference>
<dbReference type="InterPro" id="IPR000157">
    <property type="entry name" value="TIR_dom"/>
</dbReference>
<dbReference type="InterPro" id="IPR035897">
    <property type="entry name" value="Toll_tir_struct_dom_sf"/>
</dbReference>
<dbReference type="PANTHER" id="PTHR45712">
    <property type="entry name" value="AGAP008170-PA"/>
    <property type="match status" value="1"/>
</dbReference>
<dbReference type="PANTHER" id="PTHR45712:SF22">
    <property type="entry name" value="INSULIN-LIKE GROWTH FACTOR-BINDING PROTEIN COMPLEX ACID LABILE SUBUNIT"/>
    <property type="match status" value="1"/>
</dbReference>
<dbReference type="Pfam" id="PF13855">
    <property type="entry name" value="LRR_8"/>
    <property type="match status" value="4"/>
</dbReference>
<dbReference type="Pfam" id="PF13676">
    <property type="entry name" value="TIR_2"/>
    <property type="match status" value="1"/>
</dbReference>
<dbReference type="SMART" id="SM00364">
    <property type="entry name" value="LRR_BAC"/>
    <property type="match status" value="9"/>
</dbReference>
<dbReference type="SMART" id="SM00365">
    <property type="entry name" value="LRR_SD22"/>
    <property type="match status" value="5"/>
</dbReference>
<dbReference type="SMART" id="SM00369">
    <property type="entry name" value="LRR_TYP"/>
    <property type="match status" value="20"/>
</dbReference>
<dbReference type="SMART" id="SM00082">
    <property type="entry name" value="LRRCT"/>
    <property type="match status" value="1"/>
</dbReference>
<dbReference type="SMART" id="SM00255">
    <property type="entry name" value="TIR"/>
    <property type="match status" value="1"/>
</dbReference>
<dbReference type="SUPFAM" id="SSF52058">
    <property type="entry name" value="L domain-like"/>
    <property type="match status" value="3"/>
</dbReference>
<dbReference type="SUPFAM" id="SSF52200">
    <property type="entry name" value="Toll/Interleukin receptor TIR domain"/>
    <property type="match status" value="1"/>
</dbReference>
<dbReference type="PROSITE" id="PS51450">
    <property type="entry name" value="LRR"/>
    <property type="match status" value="23"/>
</dbReference>
<dbReference type="PROSITE" id="PS50104">
    <property type="entry name" value="TIR"/>
    <property type="match status" value="1"/>
</dbReference>
<organism evidence="17">
    <name type="scientific">Drosophila melanogaster</name>
    <name type="common">Fruit fly</name>
    <dbReference type="NCBI Taxonomy" id="7227"/>
    <lineage>
        <taxon>Eukaryota</taxon>
        <taxon>Metazoa</taxon>
        <taxon>Ecdysozoa</taxon>
        <taxon>Arthropoda</taxon>
        <taxon>Hexapoda</taxon>
        <taxon>Insecta</taxon>
        <taxon>Pterygota</taxon>
        <taxon>Neoptera</taxon>
        <taxon>Endopterygota</taxon>
        <taxon>Diptera</taxon>
        <taxon>Brachycera</taxon>
        <taxon>Muscomorpha</taxon>
        <taxon>Ephydroidea</taxon>
        <taxon>Drosophilidae</taxon>
        <taxon>Drosophila</taxon>
        <taxon>Sophophora</taxon>
    </lineage>
</organism>
<proteinExistence type="evidence at protein level"/>
<accession>Q7KIN0</accession>
<accession>E1NZA7</accession>
<accession>Q2XXU8</accession>
<feature type="signal peptide" evidence="3">
    <location>
        <begin position="1"/>
        <end position="16"/>
    </location>
</feature>
<feature type="chain" id="PRO_5006489795" description="Toll-like receptor 7">
    <location>
        <begin position="17"/>
        <end position="1446"/>
    </location>
</feature>
<feature type="topological domain" description="Extracellular" evidence="12">
    <location>
        <begin position="17"/>
        <end position="1049"/>
    </location>
</feature>
<feature type="transmembrane region" description="Helical" evidence="3">
    <location>
        <begin position="1050"/>
        <end position="1070"/>
    </location>
</feature>
<feature type="topological domain" description="Cytoplasmic" evidence="12">
    <location>
        <begin position="1071"/>
        <end position="1446"/>
    </location>
</feature>
<feature type="repeat" description="LRR 1" evidence="3">
    <location>
        <begin position="133"/>
        <end position="156"/>
    </location>
</feature>
<feature type="repeat" description="LRR 2" evidence="3">
    <location>
        <begin position="158"/>
        <end position="180"/>
    </location>
</feature>
<feature type="repeat" description="LRR 3" evidence="3">
    <location>
        <begin position="188"/>
        <end position="211"/>
    </location>
</feature>
<feature type="repeat" description="LRR 4" evidence="3">
    <location>
        <begin position="213"/>
        <end position="235"/>
    </location>
</feature>
<feature type="repeat" description="LRR 5" evidence="3">
    <location>
        <begin position="246"/>
        <end position="270"/>
    </location>
</feature>
<feature type="repeat" description="LRR 6" evidence="3">
    <location>
        <begin position="271"/>
        <end position="294"/>
    </location>
</feature>
<feature type="repeat" description="LRR 7" evidence="3">
    <location>
        <begin position="295"/>
        <end position="318"/>
    </location>
</feature>
<feature type="repeat" description="LRR 8" evidence="3">
    <location>
        <begin position="320"/>
        <end position="342"/>
    </location>
</feature>
<feature type="repeat" description="LRR 9" evidence="3">
    <location>
        <begin position="344"/>
        <end position="368"/>
    </location>
</feature>
<feature type="repeat" description="LRR 10" evidence="3">
    <location>
        <begin position="369"/>
        <end position="392"/>
    </location>
</feature>
<feature type="repeat" description="LRR 11" evidence="3">
    <location>
        <begin position="393"/>
        <end position="416"/>
    </location>
</feature>
<feature type="repeat" description="LRR 12" evidence="3">
    <location>
        <begin position="417"/>
        <end position="440"/>
    </location>
</feature>
<feature type="repeat" description="LRR 13" evidence="3">
    <location>
        <begin position="442"/>
        <end position="464"/>
    </location>
</feature>
<feature type="repeat" description="LRR 14" evidence="3">
    <location>
        <begin position="465"/>
        <end position="488"/>
    </location>
</feature>
<feature type="repeat" description="LRR 15" evidence="3">
    <location>
        <begin position="489"/>
        <end position="511"/>
    </location>
</feature>
<feature type="repeat" description="LRR 16" evidence="3">
    <location>
        <begin position="513"/>
        <end position="535"/>
    </location>
</feature>
<feature type="repeat" description="LRR 17" evidence="3">
    <location>
        <begin position="536"/>
        <end position="559"/>
    </location>
</feature>
<feature type="repeat" description="LRR 18" evidence="3">
    <location>
        <begin position="561"/>
        <end position="582"/>
    </location>
</feature>
<feature type="repeat" description="LRR 19" evidence="3">
    <location>
        <begin position="584"/>
        <end position="605"/>
    </location>
</feature>
<feature type="repeat" description="LRR 20" evidence="3">
    <location>
        <begin position="606"/>
        <end position="629"/>
    </location>
</feature>
<feature type="repeat" description="LRR 21" evidence="3">
    <location>
        <begin position="631"/>
        <end position="652"/>
    </location>
</feature>
<feature type="repeat" description="LRR 22" evidence="3">
    <location>
        <begin position="653"/>
        <end position="675"/>
    </location>
</feature>
<feature type="repeat" description="LRR 23" evidence="3">
    <location>
        <begin position="677"/>
        <end position="699"/>
    </location>
</feature>
<feature type="domain" description="LRRCT" evidence="3">
    <location>
        <begin position="716"/>
        <end position="773"/>
    </location>
</feature>
<feature type="repeat" description="LRR 24" evidence="3">
    <location>
        <begin position="828"/>
        <end position="851"/>
    </location>
</feature>
<feature type="repeat" description="LRR 25" evidence="3">
    <location>
        <begin position="852"/>
        <end position="875"/>
    </location>
</feature>
<feature type="repeat" description="LRR 26" evidence="3">
    <location>
        <begin position="876"/>
        <end position="899"/>
    </location>
</feature>
<feature type="repeat" description="LRR 27" evidence="3">
    <location>
        <begin position="900"/>
        <end position="923"/>
    </location>
</feature>
<feature type="repeat" description="LRR 28" evidence="3">
    <location>
        <begin position="925"/>
        <end position="947"/>
    </location>
</feature>
<feature type="repeat" description="LRR 29" evidence="3">
    <location>
        <begin position="951"/>
        <end position="979"/>
    </location>
</feature>
<feature type="domain" description="TIR" evidence="4">
    <location>
        <begin position="1096"/>
        <end position="1233"/>
    </location>
</feature>
<feature type="region of interest" description="Disordered" evidence="5">
    <location>
        <begin position="1301"/>
        <end position="1332"/>
    </location>
</feature>
<feature type="region of interest" description="Disordered" evidence="5">
    <location>
        <begin position="1388"/>
        <end position="1446"/>
    </location>
</feature>
<feature type="compositionally biased region" description="Polar residues" evidence="5">
    <location>
        <begin position="1395"/>
        <end position="1413"/>
    </location>
</feature>
<feature type="compositionally biased region" description="Low complexity" evidence="5">
    <location>
        <begin position="1414"/>
        <end position="1426"/>
    </location>
</feature>
<feature type="compositionally biased region" description="Polar residues" evidence="5">
    <location>
        <begin position="1427"/>
        <end position="1439"/>
    </location>
</feature>
<feature type="disulfide bond" evidence="2">
    <location>
        <begin position="722"/>
        <end position="772"/>
    </location>
</feature>
<feature type="disulfide bond" evidence="2">
    <location>
        <begin position="796"/>
        <end position="802"/>
    </location>
</feature>
<feature type="disulfide bond" evidence="2">
    <location>
        <begin position="800"/>
        <end position="815"/>
    </location>
</feature>
<feature type="disulfide bond" evidence="2">
    <location>
        <begin position="966"/>
        <end position="993"/>
    </location>
</feature>
<feature type="sequence conflict" description="In Ref. 4; ABA86520." evidence="12" ref="4">
    <original>P</original>
    <variation>L</variation>
    <location>
        <position position="58"/>
    </location>
</feature>
<feature type="sequence conflict" description="In Ref. 4; ABA86520." evidence="12" ref="4">
    <original>T</original>
    <variation>K</variation>
    <location>
        <position position="124"/>
    </location>
</feature>
<feature type="sequence conflict" description="In Ref. 4; ABA86520." evidence="12" ref="4">
    <location>
        <position position="1426"/>
    </location>
</feature>
<sequence length="1446" mass="160950">MAAILLLLLGFSWSLAVESALAPKESESSASAMLGAGTGAAATVSLSGDYSSLLSNVPAASPVPANPSQPSGPANQCSWSYNGTSSVHCALRLIERQPGLDLQGADGSSQLTIQCSELYLFESTLPVAVFARLQTLEALRLDSCKLLQLPNNAFEGLATLKSLRLSTHNSEWGPTRTLELFPDSLGGLKQLTDLDLGDNNLRQLPSGFLCPVGNLQVLNLTRNRIRTAEQMGFADMNCGAGSGSAGSELQVLDASHNELRSISESWGISRLRRLQHLNLAYNNLSELSGEALAGLASLRIVNLSNNHLETLPEGLFAGSKELREIHLQQNELYELPKGLFHRLEQLLVVDLSGNQLTSNHVDNTTFAGLIRLIVLNLAHNALTRIDYRTFKELYFLQILNLRNNSIGHIEDNAFLPLYNLHTLNLAENRLHTLDDKLFNGLYVLSKLTLNNNLISVVEPAVFKNCSDLKELDLSSNQLNEVPRALQDLAMLRTLDLGENQIRTFDNQSFKNLHQLTGLRLIDNQIGNITVGMFQDLPRLSVLNLAKNRIQSIERGSFDKNFELEAIRLDRNFLADINGVFATLVSLLWLNLSENHLVWFDYAFIPSNLKWLDIHGNYIEALGNYYKLQEEIRVKTLDASHNRITEIGPMSIPNTIELLFINNNLIGNVQPNAFVDKANLARVDLYANQLSKLQLQQLRVAPVVAPKPLPEFYLGGNPFECDCTMDWLQRINNLTTRQHPRVMDMANIECVMPHARGAAVRPLSGLRPQDFLCRYESHCFALCHCCDFDACDCEMTCPSNCTCYHDQIWSTNVVDCGGQQTTELPRRVPMDSSVVYLDGNNFPVLKNHAFIGRKNLRALYVNGSQVAAIQNRTFASLASLQLLHLADNKLRTLHGYEFEQLSALRELYLQNNQLTTIENATLAPLAALELIRIDGNRLVTLPIWQMHATHFGTRLKSISLGRNQWSCRCQFLQALTSYVADNALIVQDAQDIYCMAASSGTGSAALEDSSSNSGSLEKRELDFNATGAACTDYYSGGSMLQHGIPESYIPLLAAALALLFLLVVIAMVFAFRESLRIWLFAHYGVRVFGPRCEESEKLYDAVLLHSAKDSEFVCQHLAAQLETGRPPLRVCLQHRDLAHDATHYQLLEATRVSRRVVILLTRNFLQTEWARCELRRSVHDALRGRPQKLVIIEEPEVAFEAESDIELLPYLKTSAVHRIRRSDRHFWEKLRYALPVDYPTFRGNNYTLELDHHNHERVKQPASPGLLYRQAPPPAYCGPADAVGIGAVPQVVPVNASVPAEQNYSTATTATPSPRPQRRGEQPGSGSGGNHHLHAQYYQHHGMRPPSEHIYSSIDSDYSTLDNEQHMLMMPGAPGGLAMEAAQRAQTWRPKREQLHLQQAQAGTLGSKASQAAHQQQQQQQQQQQQQPNPTAVSGQQQGPHVQAYLV</sequence>
<protein>
    <recommendedName>
        <fullName evidence="12">Toll-like receptor 7</fullName>
    </recommendedName>
</protein>